<accession>Q0TAZ2</accession>
<keyword id="KW-0997">Cell inner membrane</keyword>
<keyword id="KW-1003">Cell membrane</keyword>
<keyword id="KW-0472">Membrane</keyword>
<keyword id="KW-0812">Transmembrane</keyword>
<keyword id="KW-1133">Transmembrane helix</keyword>
<name>CBRB_ECOL5</name>
<organism>
    <name type="scientific">Escherichia coli O6:K15:H31 (strain 536 / UPEC)</name>
    <dbReference type="NCBI Taxonomy" id="362663"/>
    <lineage>
        <taxon>Bacteria</taxon>
        <taxon>Pseudomonadati</taxon>
        <taxon>Pseudomonadota</taxon>
        <taxon>Gammaproteobacteria</taxon>
        <taxon>Enterobacterales</taxon>
        <taxon>Enterobacteriaceae</taxon>
        <taxon>Escherichia</taxon>
    </lineage>
</organism>
<sequence length="157" mass="16933">MSVSRRVIHHGLYFAVLGPLIGVLFLVLYIFFAKEPLILLVIIQVLPLFLLMSITTGAIPAMLTGVMVACLPEKIGSQKRYRCLVGGIGGVVITEIYCAVIVHIKDMASSALFENILSGENLVVRIIPALLAGVVMSRIITRLPGLDISCPETDSLS</sequence>
<feature type="chain" id="PRO_0000320702" description="Inner membrane protein CbrB">
    <location>
        <begin position="1"/>
        <end position="157"/>
    </location>
</feature>
<feature type="topological domain" description="Cytoplasmic" evidence="2">
    <location>
        <begin position="1"/>
        <end position="11"/>
    </location>
</feature>
<feature type="transmembrane region" description="Helical" evidence="2">
    <location>
        <begin position="12"/>
        <end position="32"/>
    </location>
</feature>
<feature type="topological domain" description="Periplasmic" evidence="2">
    <location>
        <begin position="33"/>
        <end position="36"/>
    </location>
</feature>
<feature type="transmembrane region" description="Helical" evidence="2">
    <location>
        <begin position="37"/>
        <end position="57"/>
    </location>
</feature>
<feature type="topological domain" description="Cytoplasmic" evidence="2">
    <location>
        <begin position="58"/>
        <end position="83"/>
    </location>
</feature>
<feature type="transmembrane region" description="Helical" evidence="2">
    <location>
        <begin position="84"/>
        <end position="104"/>
    </location>
</feature>
<feature type="topological domain" description="Periplasmic" evidence="2">
    <location>
        <begin position="105"/>
        <end position="115"/>
    </location>
</feature>
<feature type="transmembrane region" description="Helical" evidence="2">
    <location>
        <begin position="116"/>
        <end position="136"/>
    </location>
</feature>
<feature type="topological domain" description="Cytoplasmic" evidence="2">
    <location>
        <begin position="137"/>
        <end position="157"/>
    </location>
</feature>
<comment type="subcellular location">
    <subcellularLocation>
        <location evidence="1">Cell inner membrane</location>
        <topology evidence="1">Multi-pass membrane protein</topology>
    </subcellularLocation>
</comment>
<comment type="similarity">
    <text evidence="3">Belongs to the CbrB family.</text>
</comment>
<dbReference type="EMBL" id="CP000247">
    <property type="protein sequence ID" value="ABG71887.1"/>
    <property type="molecule type" value="Genomic_DNA"/>
</dbReference>
<dbReference type="RefSeq" id="WP_000116759.1">
    <property type="nucleotide sequence ID" value="NC_008253.1"/>
</dbReference>
<dbReference type="KEGG" id="ecp:ECP_3916"/>
<dbReference type="HOGENOM" id="CLU_139024_0_0_6"/>
<dbReference type="Proteomes" id="UP000009182">
    <property type="component" value="Chromosome"/>
</dbReference>
<dbReference type="GO" id="GO:0005886">
    <property type="term" value="C:plasma membrane"/>
    <property type="evidence" value="ECO:0007669"/>
    <property type="project" value="UniProtKB-SubCell"/>
</dbReference>
<dbReference type="NCBIfam" id="NF007334">
    <property type="entry name" value="PRK09823.1"/>
    <property type="match status" value="1"/>
</dbReference>
<gene>
    <name type="primary">cbrB</name>
    <name type="ordered locus">ECP_3916</name>
</gene>
<proteinExistence type="inferred from homology"/>
<protein>
    <recommendedName>
        <fullName>Inner membrane protein CbrB</fullName>
    </recommendedName>
</protein>
<reference key="1">
    <citation type="journal article" date="2006" name="Mol. Microbiol.">
        <title>Role of pathogenicity island-associated integrases in the genome plasticity of uropathogenic Escherichia coli strain 536.</title>
        <authorList>
            <person name="Hochhut B."/>
            <person name="Wilde C."/>
            <person name="Balling G."/>
            <person name="Middendorf B."/>
            <person name="Dobrindt U."/>
            <person name="Brzuszkiewicz E."/>
            <person name="Gottschalk G."/>
            <person name="Carniel E."/>
            <person name="Hacker J."/>
        </authorList>
    </citation>
    <scope>NUCLEOTIDE SEQUENCE [LARGE SCALE GENOMIC DNA]</scope>
    <source>
        <strain>536 / UPEC</strain>
    </source>
</reference>
<evidence type="ECO:0000250" key="1"/>
<evidence type="ECO:0000255" key="2"/>
<evidence type="ECO:0000305" key="3"/>